<proteinExistence type="inferred from homology"/>
<reference key="1">
    <citation type="journal article" date="2002" name="Lancet">
        <title>Genome and virulence determinants of high virulence community-acquired MRSA.</title>
        <authorList>
            <person name="Baba T."/>
            <person name="Takeuchi F."/>
            <person name="Kuroda M."/>
            <person name="Yuzawa H."/>
            <person name="Aoki K."/>
            <person name="Oguchi A."/>
            <person name="Nagai Y."/>
            <person name="Iwama N."/>
            <person name="Asano K."/>
            <person name="Naimi T."/>
            <person name="Kuroda H."/>
            <person name="Cui L."/>
            <person name="Yamamoto K."/>
            <person name="Hiramatsu K."/>
        </authorList>
    </citation>
    <scope>NUCLEOTIDE SEQUENCE [LARGE SCALE GENOMIC DNA]</scope>
    <source>
        <strain>MW2</strain>
    </source>
</reference>
<feature type="chain" id="PRO_0000060460" description="tRNA (guanine-N(1)-)-methyltransferase">
    <location>
        <begin position="1"/>
        <end position="245"/>
    </location>
</feature>
<feature type="binding site" evidence="1">
    <location>
        <position position="111"/>
    </location>
    <ligand>
        <name>S-adenosyl-L-methionine</name>
        <dbReference type="ChEBI" id="CHEBI:59789"/>
    </ligand>
</feature>
<feature type="binding site" evidence="1">
    <location>
        <begin position="131"/>
        <end position="136"/>
    </location>
    <ligand>
        <name>S-adenosyl-L-methionine</name>
        <dbReference type="ChEBI" id="CHEBI:59789"/>
    </ligand>
</feature>
<organism>
    <name type="scientific">Staphylococcus aureus (strain MW2)</name>
    <dbReference type="NCBI Taxonomy" id="196620"/>
    <lineage>
        <taxon>Bacteria</taxon>
        <taxon>Bacillati</taxon>
        <taxon>Bacillota</taxon>
        <taxon>Bacilli</taxon>
        <taxon>Bacillales</taxon>
        <taxon>Staphylococcaceae</taxon>
        <taxon>Staphylococcus</taxon>
    </lineage>
</organism>
<comment type="function">
    <text evidence="1">Specifically methylates guanosine-37 in various tRNAs.</text>
</comment>
<comment type="catalytic activity">
    <reaction>
        <text>guanosine(37) in tRNA + S-adenosyl-L-methionine = N(1)-methylguanosine(37) in tRNA + S-adenosyl-L-homocysteine + H(+)</text>
        <dbReference type="Rhea" id="RHEA:36899"/>
        <dbReference type="Rhea" id="RHEA-COMP:10145"/>
        <dbReference type="Rhea" id="RHEA-COMP:10147"/>
        <dbReference type="ChEBI" id="CHEBI:15378"/>
        <dbReference type="ChEBI" id="CHEBI:57856"/>
        <dbReference type="ChEBI" id="CHEBI:59789"/>
        <dbReference type="ChEBI" id="CHEBI:73542"/>
        <dbReference type="ChEBI" id="CHEBI:74269"/>
        <dbReference type="EC" id="2.1.1.228"/>
    </reaction>
</comment>
<comment type="subunit">
    <text evidence="1">Homodimer.</text>
</comment>
<comment type="subcellular location">
    <subcellularLocation>
        <location evidence="2">Cytoplasm</location>
    </subcellularLocation>
</comment>
<comment type="similarity">
    <text evidence="2">Belongs to the RNA methyltransferase TrmD family.</text>
</comment>
<accession>Q8NX06</accession>
<dbReference type="EC" id="2.1.1.228"/>
<dbReference type="EMBL" id="BA000033">
    <property type="protein sequence ID" value="BAB94988.1"/>
    <property type="molecule type" value="Genomic_DNA"/>
</dbReference>
<dbReference type="RefSeq" id="WP_000687328.1">
    <property type="nucleotide sequence ID" value="NC_003923.1"/>
</dbReference>
<dbReference type="SMR" id="Q8NX06"/>
<dbReference type="KEGG" id="sam:MW1123"/>
<dbReference type="HOGENOM" id="CLU_047363_0_1_9"/>
<dbReference type="GO" id="GO:0005829">
    <property type="term" value="C:cytosol"/>
    <property type="evidence" value="ECO:0007669"/>
    <property type="project" value="TreeGrafter"/>
</dbReference>
<dbReference type="GO" id="GO:0052906">
    <property type="term" value="F:tRNA (guanine(37)-N1)-methyltransferase activity"/>
    <property type="evidence" value="ECO:0007669"/>
    <property type="project" value="UniProtKB-UniRule"/>
</dbReference>
<dbReference type="GO" id="GO:0002939">
    <property type="term" value="P:tRNA N1-guanine methylation"/>
    <property type="evidence" value="ECO:0007669"/>
    <property type="project" value="TreeGrafter"/>
</dbReference>
<dbReference type="CDD" id="cd18080">
    <property type="entry name" value="TrmD-like"/>
    <property type="match status" value="1"/>
</dbReference>
<dbReference type="FunFam" id="1.10.1270.20:FF:000001">
    <property type="entry name" value="tRNA (guanine-N(1)-)-methyltransferase"/>
    <property type="match status" value="1"/>
</dbReference>
<dbReference type="FunFam" id="3.40.1280.10:FF:000001">
    <property type="entry name" value="tRNA (guanine-N(1)-)-methyltransferase"/>
    <property type="match status" value="1"/>
</dbReference>
<dbReference type="Gene3D" id="3.40.1280.10">
    <property type="match status" value="1"/>
</dbReference>
<dbReference type="Gene3D" id="1.10.1270.20">
    <property type="entry name" value="tRNA(m1g37)methyltransferase, domain 2"/>
    <property type="match status" value="1"/>
</dbReference>
<dbReference type="HAMAP" id="MF_00605">
    <property type="entry name" value="TrmD"/>
    <property type="match status" value="1"/>
</dbReference>
<dbReference type="InterPro" id="IPR029028">
    <property type="entry name" value="Alpha/beta_knot_MTases"/>
</dbReference>
<dbReference type="InterPro" id="IPR023148">
    <property type="entry name" value="tRNA_m1G_MeTrfase_C_sf"/>
</dbReference>
<dbReference type="InterPro" id="IPR002649">
    <property type="entry name" value="tRNA_m1G_MeTrfase_TrmD"/>
</dbReference>
<dbReference type="InterPro" id="IPR029026">
    <property type="entry name" value="tRNA_m1G_MTases_N"/>
</dbReference>
<dbReference type="InterPro" id="IPR016009">
    <property type="entry name" value="tRNA_MeTrfase_TRMD/TRM10"/>
</dbReference>
<dbReference type="NCBIfam" id="NF000648">
    <property type="entry name" value="PRK00026.1"/>
    <property type="match status" value="1"/>
</dbReference>
<dbReference type="NCBIfam" id="TIGR00088">
    <property type="entry name" value="trmD"/>
    <property type="match status" value="1"/>
</dbReference>
<dbReference type="PANTHER" id="PTHR46417">
    <property type="entry name" value="TRNA (GUANINE-N(1)-)-METHYLTRANSFERASE"/>
    <property type="match status" value="1"/>
</dbReference>
<dbReference type="PANTHER" id="PTHR46417:SF1">
    <property type="entry name" value="TRNA (GUANINE-N(1)-)-METHYLTRANSFERASE"/>
    <property type="match status" value="1"/>
</dbReference>
<dbReference type="Pfam" id="PF01746">
    <property type="entry name" value="tRNA_m1G_MT"/>
    <property type="match status" value="1"/>
</dbReference>
<dbReference type="PIRSF" id="PIRSF000386">
    <property type="entry name" value="tRNA_mtase"/>
    <property type="match status" value="1"/>
</dbReference>
<dbReference type="SUPFAM" id="SSF75217">
    <property type="entry name" value="alpha/beta knot"/>
    <property type="match status" value="1"/>
</dbReference>
<evidence type="ECO:0000250" key="1"/>
<evidence type="ECO:0000305" key="2"/>
<keyword id="KW-0963">Cytoplasm</keyword>
<keyword id="KW-0489">Methyltransferase</keyword>
<keyword id="KW-0949">S-adenosyl-L-methionine</keyword>
<keyword id="KW-0808">Transferase</keyword>
<keyword id="KW-0819">tRNA processing</keyword>
<sequence>MKIDYLTLFPEMFDGVLNHSIMKRAQENNKLQINTVNFRDYAINKHNQVDDYPYGGGQGMVLKPEPVFNAMEDLDVTEQTRVILMCPQGEPFSHQKAVELSKADHIVFICGHYEGYDERIRTHLVTDEISMGDYVLTGGELPAMTMTDAIVRLIPGVLGNEQSHQDDSFSDGLLEFPQYTRPREFKGLTVPDVLLSGNHANIDAWRHEQKLIRTYNKRPDLIEKYPLTNADKQILERYKIGLKKG</sequence>
<protein>
    <recommendedName>
        <fullName>tRNA (guanine-N(1)-)-methyltransferase</fullName>
        <ecNumber>2.1.1.228</ecNumber>
    </recommendedName>
    <alternativeName>
        <fullName>M1G-methyltransferase</fullName>
    </alternativeName>
    <alternativeName>
        <fullName>tRNA [GM37] methyltransferase</fullName>
    </alternativeName>
</protein>
<gene>
    <name type="primary">trmD</name>
    <name type="ordered locus">MW1123</name>
</gene>
<name>TRMD_STAAW</name>